<gene>
    <name evidence="1" type="primary">rpmI</name>
    <name type="ordered locus">BR2119</name>
    <name type="ordered locus">BS1330_I2113</name>
</gene>
<organism>
    <name type="scientific">Brucella suis biovar 1 (strain 1330)</name>
    <dbReference type="NCBI Taxonomy" id="204722"/>
    <lineage>
        <taxon>Bacteria</taxon>
        <taxon>Pseudomonadati</taxon>
        <taxon>Pseudomonadota</taxon>
        <taxon>Alphaproteobacteria</taxon>
        <taxon>Hyphomicrobiales</taxon>
        <taxon>Brucellaceae</taxon>
        <taxon>Brucella/Ochrobactrum group</taxon>
        <taxon>Brucella</taxon>
    </lineage>
</organism>
<feature type="chain" id="PRO_0000177338" description="Large ribosomal subunit protein bL35">
    <location>
        <begin position="1"/>
        <end position="66"/>
    </location>
</feature>
<evidence type="ECO:0000255" key="1">
    <source>
        <dbReference type="HAMAP-Rule" id="MF_00514"/>
    </source>
</evidence>
<evidence type="ECO:0000305" key="2"/>
<comment type="similarity">
    <text evidence="1">Belongs to the bacterial ribosomal protein bL35 family.</text>
</comment>
<protein>
    <recommendedName>
        <fullName evidence="1">Large ribosomal subunit protein bL35</fullName>
    </recommendedName>
    <alternativeName>
        <fullName evidence="2">50S ribosomal protein L35</fullName>
    </alternativeName>
</protein>
<proteinExistence type="inferred from homology"/>
<accession>P66266</accession>
<accession>G0K967</accession>
<accession>Q8YE70</accession>
<dbReference type="EMBL" id="AE014291">
    <property type="protein sequence ID" value="AAN31009.1"/>
    <property type="molecule type" value="Genomic_DNA"/>
</dbReference>
<dbReference type="EMBL" id="CP002997">
    <property type="protein sequence ID" value="AEM19426.1"/>
    <property type="molecule type" value="Genomic_DNA"/>
</dbReference>
<dbReference type="RefSeq" id="WP_002965184.1">
    <property type="nucleotide sequence ID" value="NZ_KN046804.1"/>
</dbReference>
<dbReference type="SMR" id="P66266"/>
<dbReference type="GeneID" id="93017574"/>
<dbReference type="KEGG" id="bms:BR2119"/>
<dbReference type="KEGG" id="bsi:BS1330_I2113"/>
<dbReference type="PATRIC" id="fig|204722.21.peg.696"/>
<dbReference type="HOGENOM" id="CLU_169643_2_1_5"/>
<dbReference type="Proteomes" id="UP000007104">
    <property type="component" value="Chromosome I"/>
</dbReference>
<dbReference type="GO" id="GO:0022625">
    <property type="term" value="C:cytosolic large ribosomal subunit"/>
    <property type="evidence" value="ECO:0007669"/>
    <property type="project" value="TreeGrafter"/>
</dbReference>
<dbReference type="GO" id="GO:0003735">
    <property type="term" value="F:structural constituent of ribosome"/>
    <property type="evidence" value="ECO:0007669"/>
    <property type="project" value="InterPro"/>
</dbReference>
<dbReference type="GO" id="GO:0006412">
    <property type="term" value="P:translation"/>
    <property type="evidence" value="ECO:0007669"/>
    <property type="project" value="UniProtKB-UniRule"/>
</dbReference>
<dbReference type="FunFam" id="4.10.410.60:FF:000001">
    <property type="entry name" value="50S ribosomal protein L35"/>
    <property type="match status" value="1"/>
</dbReference>
<dbReference type="Gene3D" id="4.10.410.60">
    <property type="match status" value="1"/>
</dbReference>
<dbReference type="HAMAP" id="MF_00514">
    <property type="entry name" value="Ribosomal_bL35"/>
    <property type="match status" value="1"/>
</dbReference>
<dbReference type="InterPro" id="IPR001706">
    <property type="entry name" value="Ribosomal_bL35"/>
</dbReference>
<dbReference type="InterPro" id="IPR021137">
    <property type="entry name" value="Ribosomal_bL35-like"/>
</dbReference>
<dbReference type="InterPro" id="IPR018265">
    <property type="entry name" value="Ribosomal_bL35_CS"/>
</dbReference>
<dbReference type="InterPro" id="IPR037229">
    <property type="entry name" value="Ribosomal_bL35_sf"/>
</dbReference>
<dbReference type="NCBIfam" id="TIGR00001">
    <property type="entry name" value="rpmI_bact"/>
    <property type="match status" value="1"/>
</dbReference>
<dbReference type="PANTHER" id="PTHR33343">
    <property type="entry name" value="54S RIBOSOMAL PROTEIN BL35M"/>
    <property type="match status" value="1"/>
</dbReference>
<dbReference type="PANTHER" id="PTHR33343:SF1">
    <property type="entry name" value="LARGE RIBOSOMAL SUBUNIT PROTEIN BL35M"/>
    <property type="match status" value="1"/>
</dbReference>
<dbReference type="Pfam" id="PF01632">
    <property type="entry name" value="Ribosomal_L35p"/>
    <property type="match status" value="1"/>
</dbReference>
<dbReference type="PRINTS" id="PR00064">
    <property type="entry name" value="RIBOSOMALL35"/>
</dbReference>
<dbReference type="SUPFAM" id="SSF143034">
    <property type="entry name" value="L35p-like"/>
    <property type="match status" value="1"/>
</dbReference>
<dbReference type="PROSITE" id="PS00936">
    <property type="entry name" value="RIBOSOMAL_L35"/>
    <property type="match status" value="1"/>
</dbReference>
<name>RL35_BRUSU</name>
<keyword id="KW-0687">Ribonucleoprotein</keyword>
<keyword id="KW-0689">Ribosomal protein</keyword>
<reference key="1">
    <citation type="journal article" date="2002" name="Proc. Natl. Acad. Sci. U.S.A.">
        <title>The Brucella suis genome reveals fundamental similarities between animal and plant pathogens and symbionts.</title>
        <authorList>
            <person name="Paulsen I.T."/>
            <person name="Seshadri R."/>
            <person name="Nelson K.E."/>
            <person name="Eisen J.A."/>
            <person name="Heidelberg J.F."/>
            <person name="Read T.D."/>
            <person name="Dodson R.J."/>
            <person name="Umayam L.A."/>
            <person name="Brinkac L.M."/>
            <person name="Beanan M.J."/>
            <person name="Daugherty S.C."/>
            <person name="DeBoy R.T."/>
            <person name="Durkin A.S."/>
            <person name="Kolonay J.F."/>
            <person name="Madupu R."/>
            <person name="Nelson W.C."/>
            <person name="Ayodeji B."/>
            <person name="Kraul M."/>
            <person name="Shetty J."/>
            <person name="Malek J.A."/>
            <person name="Van Aken S.E."/>
            <person name="Riedmuller S."/>
            <person name="Tettelin H."/>
            <person name="Gill S.R."/>
            <person name="White O."/>
            <person name="Salzberg S.L."/>
            <person name="Hoover D.L."/>
            <person name="Lindler L.E."/>
            <person name="Halling S.M."/>
            <person name="Boyle S.M."/>
            <person name="Fraser C.M."/>
        </authorList>
    </citation>
    <scope>NUCLEOTIDE SEQUENCE [LARGE SCALE GENOMIC DNA]</scope>
    <source>
        <strain>1330</strain>
    </source>
</reference>
<reference key="2">
    <citation type="journal article" date="2011" name="J. Bacteriol.">
        <title>Revised genome sequence of Brucella suis 1330.</title>
        <authorList>
            <person name="Tae H."/>
            <person name="Shallom S."/>
            <person name="Settlage R."/>
            <person name="Preston D."/>
            <person name="Adams L.G."/>
            <person name="Garner H.R."/>
        </authorList>
    </citation>
    <scope>NUCLEOTIDE SEQUENCE [LARGE SCALE GENOMIC DNA]</scope>
    <source>
        <strain>1330</strain>
    </source>
</reference>
<sequence>MPKMKTKSAAKKRFKITGTGKVKAAAAGKRHGMIKRSNKFIRDARGTMVLADADAKIVKQFLPNGL</sequence>